<evidence type="ECO:0000250" key="1">
    <source>
        <dbReference type="UniProtKB" id="Q7Z6J8"/>
    </source>
</evidence>
<evidence type="ECO:0000305" key="2"/>
<reference key="1">
    <citation type="journal article" date="2004" name="Genome Res.">
        <title>The status, quality, and expansion of the NIH full-length cDNA project: the Mammalian Gene Collection (MGC).</title>
        <authorList>
            <consortium name="The MGC Project Team"/>
        </authorList>
    </citation>
    <scope>NUCLEOTIDE SEQUENCE [LARGE SCALE MRNA]</scope>
    <source>
        <tissue>Prostate</tissue>
    </source>
</reference>
<sequence length="370" mass="41056">MAVVEAETRVFLEVRRRLQSALLILGEPDEGGMNLDISVTPTSLLMRSPDGCTEIRLPAGVRLAPSSCGGLQYISGDGLHLRLRAQAESSPQPISGFNQSLQAQECCSFYCQSCGEVTIKDRKLLRVLPLPSENWSALVGEWCCHPDPFANKPLHPRENDCFVGDSFFLVNSRSDLEQEPKANTKVICKRCKVMLGETVSSETTKFYMTEVIVQPSEGSFPNIPRSQFVQSVIARCLVELCTARSTFRFTIQGQDGKVYILLWVLNSDSLVMEPLSSSGCIRKFPLLEDSLEADSGSAWNAIKVLYQPCIKSRNKELASSWEGDISVHPLTLPSTTCLELLLILSRNNASLPLSLRQMNSFQLWCSHCKT</sequence>
<organism>
    <name type="scientific">Rattus norvegicus</name>
    <name type="common">Rat</name>
    <dbReference type="NCBI Taxonomy" id="10116"/>
    <lineage>
        <taxon>Eukaryota</taxon>
        <taxon>Metazoa</taxon>
        <taxon>Chordata</taxon>
        <taxon>Craniata</taxon>
        <taxon>Vertebrata</taxon>
        <taxon>Euteleostomi</taxon>
        <taxon>Mammalia</taxon>
        <taxon>Eutheria</taxon>
        <taxon>Euarchontoglires</taxon>
        <taxon>Glires</taxon>
        <taxon>Rodentia</taxon>
        <taxon>Myomorpha</taxon>
        <taxon>Muroidea</taxon>
        <taxon>Muridae</taxon>
        <taxon>Murinae</taxon>
        <taxon>Rattus</taxon>
    </lineage>
</organism>
<gene>
    <name type="primary">Ube3d</name>
    <name type="synonym">H10bh</name>
    <name type="synonym">Ube2cbp</name>
</gene>
<name>UBE3D_RAT</name>
<accession>Q3T1H6</accession>
<keyword id="KW-0007">Acetylation</keyword>
<keyword id="KW-0963">Cytoplasm</keyword>
<keyword id="KW-0479">Metal-binding</keyword>
<keyword id="KW-1185">Reference proteome</keyword>
<keyword id="KW-0808">Transferase</keyword>
<keyword id="KW-0832">Ubl conjugation</keyword>
<keyword id="KW-0833">Ubl conjugation pathway</keyword>
<keyword id="KW-0862">Zinc</keyword>
<feature type="initiator methionine" description="Removed" evidence="1">
    <location>
        <position position="1"/>
    </location>
</feature>
<feature type="chain" id="PRO_0000311193" description="E3 ubiquitin-protein ligase E3D">
    <location>
        <begin position="2"/>
        <end position="370"/>
    </location>
</feature>
<feature type="region of interest" description="Interaction with UBE2C" evidence="1">
    <location>
        <begin position="214"/>
        <end position="236"/>
    </location>
</feature>
<feature type="region of interest" description="HECT-like" evidence="1">
    <location>
        <begin position="332"/>
        <end position="368"/>
    </location>
</feature>
<feature type="short sequence motif" description="BRAT1-like motif" evidence="1">
    <location>
        <begin position="129"/>
        <end position="159"/>
    </location>
</feature>
<feature type="binding site" evidence="1">
    <location>
        <position position="144"/>
    </location>
    <ligand>
        <name>Zn(2+)</name>
        <dbReference type="ChEBI" id="CHEBI:29105"/>
    </ligand>
</feature>
<feature type="modified residue" description="N-acetylalanine" evidence="1">
    <location>
        <position position="2"/>
    </location>
</feature>
<protein>
    <recommendedName>
        <fullName>E3 ubiquitin-protein ligase E3D</fullName>
        <ecNumber>2.3.2.26</ecNumber>
    </recommendedName>
    <alternativeName>
        <fullName evidence="2">HECT-type E3 ubiquitin transferase E3D</fullName>
    </alternativeName>
    <alternativeName>
        <fullName>UbcH10-binding protein with a HECT-like domain</fullName>
    </alternativeName>
    <alternativeName>
        <fullName>Ubiquitin-conjugating enzyme E2C-binding protein</fullName>
    </alternativeName>
</protein>
<proteinExistence type="evidence at transcript level"/>
<comment type="function">
    <text evidence="1">E3 ubiquitin-protein ligase which accepts ubiquitin from specific E2 ubiquitin-conjugating enzymes, and transfers it to substrates, generally promoting their degradation by the proteasome. Independently of its E3 ubiquitin-protein ligase activity, acts as an inhibitor of CPSF3 endonuclease activity by blocking CPSF3 active site.</text>
</comment>
<comment type="catalytic activity">
    <reaction evidence="1">
        <text>S-ubiquitinyl-[E2 ubiquitin-conjugating enzyme]-L-cysteine + [acceptor protein]-L-lysine = [E2 ubiquitin-conjugating enzyme]-L-cysteine + N(6)-ubiquitinyl-[acceptor protein]-L-lysine.</text>
        <dbReference type="EC" id="2.3.2.26"/>
    </reaction>
</comment>
<comment type="pathway">
    <text evidence="1">Protein modification; protein ubiquitination.</text>
</comment>
<comment type="subunit">
    <text evidence="1">Interacts with UBE2C/UbcH10 (E2 ubiquitin-conjugating enzyme). In vitro, interacts with cyclin-B.</text>
</comment>
<comment type="subcellular location">
    <subcellularLocation>
        <location evidence="1">Cytoplasm</location>
    </subcellularLocation>
</comment>
<comment type="domain">
    <text evidence="1">The C-terminal half (AA 188-389) is able to bind cyclin-B and shows a self-ubiquitination activity (mono-, poly, or multi-ubiquitination) in a HECT-like sequence dependent manner.</text>
</comment>
<comment type="domain">
    <text evidence="1">The BRAT1-like motif mediates inhibition of the endonuclease activity of CPSF3 by forming hyrogen bond and hydrophobic interactions with the active site of CPSF3: Cys-144 coordinates one of the two active site zinc ions of CPSF3.</text>
</comment>
<comment type="PTM">
    <text evidence="1">Ubiquitinated by UBCH10 (E2 ubiquitin-conjugating enzyme).</text>
</comment>
<dbReference type="EC" id="2.3.2.26"/>
<dbReference type="EMBL" id="BC101916">
    <property type="protein sequence ID" value="AAI01917.1"/>
    <property type="molecule type" value="mRNA"/>
</dbReference>
<dbReference type="RefSeq" id="NP_001034699.1">
    <property type="nucleotide sequence ID" value="NM_001039610.2"/>
</dbReference>
<dbReference type="FunCoup" id="Q3T1H6">
    <property type="interactions" value="874"/>
</dbReference>
<dbReference type="STRING" id="10116.ENSRNOP00000014600"/>
<dbReference type="PhosphoSitePlus" id="Q3T1H6"/>
<dbReference type="PaxDb" id="10116-ENSRNOP00000014600"/>
<dbReference type="Ensembl" id="ENSRNOT00000014600.6">
    <property type="protein sequence ID" value="ENSRNOP00000014600.4"/>
    <property type="gene ID" value="ENSRNOG00000010802.6"/>
</dbReference>
<dbReference type="GeneID" id="315863"/>
<dbReference type="KEGG" id="rno:315863"/>
<dbReference type="UCSC" id="RGD:1306773">
    <property type="organism name" value="rat"/>
</dbReference>
<dbReference type="AGR" id="RGD:1306773"/>
<dbReference type="CTD" id="90025"/>
<dbReference type="RGD" id="1306773">
    <property type="gene designation" value="Ube3d"/>
</dbReference>
<dbReference type="eggNOG" id="KOG4784">
    <property type="taxonomic scope" value="Eukaryota"/>
</dbReference>
<dbReference type="GeneTree" id="ENSGT00390000003986"/>
<dbReference type="InParanoid" id="Q3T1H6"/>
<dbReference type="OrthoDB" id="66510at2759"/>
<dbReference type="PhylomeDB" id="Q3T1H6"/>
<dbReference type="TreeFam" id="TF324684"/>
<dbReference type="Reactome" id="R-RNO-983168">
    <property type="pathway name" value="Antigen processing: Ubiquitination &amp; Proteasome degradation"/>
</dbReference>
<dbReference type="UniPathway" id="UPA00143"/>
<dbReference type="PRO" id="PR:Q3T1H6"/>
<dbReference type="Proteomes" id="UP000002494">
    <property type="component" value="Chromosome 8"/>
</dbReference>
<dbReference type="Bgee" id="ENSRNOG00000010802">
    <property type="expression patterns" value="Expressed in quadriceps femoris and 18 other cell types or tissues"/>
</dbReference>
<dbReference type="ExpressionAtlas" id="Q3T1H6">
    <property type="expression patterns" value="baseline and differential"/>
</dbReference>
<dbReference type="GO" id="GO:0005829">
    <property type="term" value="C:cytosol"/>
    <property type="evidence" value="ECO:0000266"/>
    <property type="project" value="RGD"/>
</dbReference>
<dbReference type="GO" id="GO:0005634">
    <property type="term" value="C:nucleus"/>
    <property type="evidence" value="ECO:0000318"/>
    <property type="project" value="GO_Central"/>
</dbReference>
<dbReference type="GO" id="GO:0000151">
    <property type="term" value="C:ubiquitin ligase complex"/>
    <property type="evidence" value="ECO:0000266"/>
    <property type="project" value="RGD"/>
</dbReference>
<dbReference type="GO" id="GO:0030332">
    <property type="term" value="F:cyclin binding"/>
    <property type="evidence" value="ECO:0000266"/>
    <property type="project" value="RGD"/>
</dbReference>
<dbReference type="GO" id="GO:0031624">
    <property type="term" value="F:ubiquitin conjugating enzyme binding"/>
    <property type="evidence" value="ECO:0000318"/>
    <property type="project" value="GO_Central"/>
</dbReference>
<dbReference type="GO" id="GO:0061630">
    <property type="term" value="F:ubiquitin protein ligase activity"/>
    <property type="evidence" value="ECO:0000266"/>
    <property type="project" value="RGD"/>
</dbReference>
<dbReference type="GO" id="GO:0044390">
    <property type="term" value="F:ubiquitin-like protein conjugating enzyme binding"/>
    <property type="evidence" value="ECO:0000266"/>
    <property type="project" value="RGD"/>
</dbReference>
<dbReference type="GO" id="GO:0043161">
    <property type="term" value="P:proteasome-mediated ubiquitin-dependent protein catabolic process"/>
    <property type="evidence" value="ECO:0000318"/>
    <property type="project" value="GO_Central"/>
</dbReference>
<dbReference type="GO" id="GO:0051865">
    <property type="term" value="P:protein autoubiquitination"/>
    <property type="evidence" value="ECO:0000266"/>
    <property type="project" value="RGD"/>
</dbReference>
<dbReference type="GO" id="GO:0006513">
    <property type="term" value="P:protein monoubiquitination"/>
    <property type="evidence" value="ECO:0000266"/>
    <property type="project" value="RGD"/>
</dbReference>
<dbReference type="GO" id="GO:0000209">
    <property type="term" value="P:protein polyubiquitination"/>
    <property type="evidence" value="ECO:0000266"/>
    <property type="project" value="RGD"/>
</dbReference>
<dbReference type="InterPro" id="IPR019193">
    <property type="entry name" value="UBQ-conj_enz_E2-bd_prot"/>
</dbReference>
<dbReference type="PANTHER" id="PTHR31531:SF2">
    <property type="entry name" value="E3 UBIQUITIN-PROTEIN LIGASE E3D"/>
    <property type="match status" value="1"/>
</dbReference>
<dbReference type="PANTHER" id="PTHR31531">
    <property type="entry name" value="E3 UBIQUITIN-PROTEIN LIGASE E3D FAMILY MEMBER"/>
    <property type="match status" value="1"/>
</dbReference>
<dbReference type="Pfam" id="PF09814">
    <property type="entry name" value="HECT_2"/>
    <property type="match status" value="1"/>
</dbReference>